<keyword id="KW-0378">Hydrolase</keyword>
<keyword id="KW-1185">Reference proteome</keyword>
<sequence>MRHAKSSYPRGFPDHIADHDRRLAPRGVREASLAGGWLRTNVPAIEKVLCSTAMRARETLTHSGIEAPVRYTERLYRADPDTVIKEIKAISDEVTTSLIVSHEPTISAVALALTGSGTNNDAAQRISTKFPTSGIAVLNVAGRWQHLELESAELVAFHVPR</sequence>
<comment type="similarity">
    <text evidence="1">Belongs to the SixA phosphatase family.</text>
</comment>
<protein>
    <recommendedName>
        <fullName>Uncharacterized protein ML1117</fullName>
        <ecNumber>3.1.3.-</ecNumber>
    </recommendedName>
</protein>
<evidence type="ECO:0000305" key="1"/>
<feature type="chain" id="PRO_0000214572" description="Uncharacterized protein ML1117">
    <location>
        <begin position="1"/>
        <end position="161"/>
    </location>
</feature>
<reference key="1">
    <citation type="journal article" date="2001" name="Nature">
        <title>Massive gene decay in the leprosy bacillus.</title>
        <authorList>
            <person name="Cole S.T."/>
            <person name="Eiglmeier K."/>
            <person name="Parkhill J."/>
            <person name="James K.D."/>
            <person name="Thomson N.R."/>
            <person name="Wheeler P.R."/>
            <person name="Honore N."/>
            <person name="Garnier T."/>
            <person name="Churcher C.M."/>
            <person name="Harris D.E."/>
            <person name="Mungall K.L."/>
            <person name="Basham D."/>
            <person name="Brown D."/>
            <person name="Chillingworth T."/>
            <person name="Connor R."/>
            <person name="Davies R.M."/>
            <person name="Devlin K."/>
            <person name="Duthoy S."/>
            <person name="Feltwell T."/>
            <person name="Fraser A."/>
            <person name="Hamlin N."/>
            <person name="Holroyd S."/>
            <person name="Hornsby T."/>
            <person name="Jagels K."/>
            <person name="Lacroix C."/>
            <person name="Maclean J."/>
            <person name="Moule S."/>
            <person name="Murphy L.D."/>
            <person name="Oliver K."/>
            <person name="Quail M.A."/>
            <person name="Rajandream M.A."/>
            <person name="Rutherford K.M."/>
            <person name="Rutter S."/>
            <person name="Seeger K."/>
            <person name="Simon S."/>
            <person name="Simmonds M."/>
            <person name="Skelton J."/>
            <person name="Squares R."/>
            <person name="Squares S."/>
            <person name="Stevens K."/>
            <person name="Taylor K."/>
            <person name="Whitehead S."/>
            <person name="Woodward J.R."/>
            <person name="Barrell B.G."/>
        </authorList>
    </citation>
    <scope>NUCLEOTIDE SEQUENCE [LARGE SCALE GENOMIC DNA]</scope>
    <source>
        <strain>TN</strain>
    </source>
</reference>
<proteinExistence type="inferred from homology"/>
<gene>
    <name type="ordered locus">ML1117</name>
</gene>
<accession>Q9CC85</accession>
<dbReference type="EC" id="3.1.3.-"/>
<dbReference type="EMBL" id="AL583920">
    <property type="protein sequence ID" value="CAC31498.1"/>
    <property type="molecule type" value="Genomic_DNA"/>
</dbReference>
<dbReference type="PIR" id="G87048">
    <property type="entry name" value="G87048"/>
</dbReference>
<dbReference type="RefSeq" id="NP_301814.1">
    <property type="nucleotide sequence ID" value="NC_002677.1"/>
</dbReference>
<dbReference type="SMR" id="Q9CC85"/>
<dbReference type="STRING" id="272631.gene:17574943"/>
<dbReference type="KEGG" id="mle:ML1117"/>
<dbReference type="PATRIC" id="fig|272631.5.peg.2013"/>
<dbReference type="Leproma" id="ML1117"/>
<dbReference type="eggNOG" id="COG2062">
    <property type="taxonomic scope" value="Bacteria"/>
</dbReference>
<dbReference type="HOGENOM" id="CLU_084603_2_1_11"/>
<dbReference type="OrthoDB" id="9810154at2"/>
<dbReference type="Proteomes" id="UP000000806">
    <property type="component" value="Chromosome"/>
</dbReference>
<dbReference type="GO" id="GO:0016787">
    <property type="term" value="F:hydrolase activity"/>
    <property type="evidence" value="ECO:0007669"/>
    <property type="project" value="UniProtKB-KW"/>
</dbReference>
<dbReference type="CDD" id="cd07040">
    <property type="entry name" value="HP"/>
    <property type="match status" value="1"/>
</dbReference>
<dbReference type="Gene3D" id="3.40.50.1240">
    <property type="entry name" value="Phosphoglycerate mutase-like"/>
    <property type="match status" value="1"/>
</dbReference>
<dbReference type="InterPro" id="IPR013078">
    <property type="entry name" value="His_Pase_superF_clade-1"/>
</dbReference>
<dbReference type="InterPro" id="IPR029033">
    <property type="entry name" value="His_PPase_superfam"/>
</dbReference>
<dbReference type="SMART" id="SM00855">
    <property type="entry name" value="PGAM"/>
    <property type="match status" value="1"/>
</dbReference>
<dbReference type="SUPFAM" id="SSF53254">
    <property type="entry name" value="Phosphoglycerate mutase-like"/>
    <property type="match status" value="1"/>
</dbReference>
<organism>
    <name type="scientific">Mycobacterium leprae (strain TN)</name>
    <dbReference type="NCBI Taxonomy" id="272631"/>
    <lineage>
        <taxon>Bacteria</taxon>
        <taxon>Bacillati</taxon>
        <taxon>Actinomycetota</taxon>
        <taxon>Actinomycetes</taxon>
        <taxon>Mycobacteriales</taxon>
        <taxon>Mycobacteriaceae</taxon>
        <taxon>Mycobacterium</taxon>
    </lineage>
</organism>
<name>Y1117_MYCLE</name>